<accession>Q054P9</accession>
<keyword id="KW-0067">ATP-binding</keyword>
<keyword id="KW-0520">NAD</keyword>
<keyword id="KW-0547">Nucleotide-binding</keyword>
<keyword id="KW-0548">Nucleotidyltransferase</keyword>
<keyword id="KW-0662">Pyridine nucleotide biosynthesis</keyword>
<keyword id="KW-0808">Transferase</keyword>
<reference key="1">
    <citation type="journal article" date="2006" name="Proc. Natl. Acad. Sci. U.S.A.">
        <title>Genome reduction in Leptospira borgpetersenii reflects limited transmission potential.</title>
        <authorList>
            <person name="Bulach D.M."/>
            <person name="Zuerner R.L."/>
            <person name="Wilson P."/>
            <person name="Seemann T."/>
            <person name="McGrath A."/>
            <person name="Cullen P.A."/>
            <person name="Davis J."/>
            <person name="Johnson M."/>
            <person name="Kuczek E."/>
            <person name="Alt D.P."/>
            <person name="Peterson-Burch B."/>
            <person name="Coppel R.L."/>
            <person name="Rood J.I."/>
            <person name="Davies J.K."/>
            <person name="Adler B."/>
        </authorList>
    </citation>
    <scope>NUCLEOTIDE SEQUENCE [LARGE SCALE GENOMIC DNA]</scope>
    <source>
        <strain>L550</strain>
    </source>
</reference>
<evidence type="ECO:0000255" key="1">
    <source>
        <dbReference type="HAMAP-Rule" id="MF_00244"/>
    </source>
</evidence>
<dbReference type="EC" id="2.7.7.18" evidence="1"/>
<dbReference type="EMBL" id="CP000348">
    <property type="protein sequence ID" value="ABJ78196.1"/>
    <property type="molecule type" value="Genomic_DNA"/>
</dbReference>
<dbReference type="RefSeq" id="WP_011669541.1">
    <property type="nucleotide sequence ID" value="NC_008508.1"/>
</dbReference>
<dbReference type="SMR" id="Q054P9"/>
<dbReference type="KEGG" id="lbl:LBL_0618"/>
<dbReference type="HOGENOM" id="CLU_069765_3_2_12"/>
<dbReference type="UniPathway" id="UPA00253">
    <property type="reaction ID" value="UER00332"/>
</dbReference>
<dbReference type="GO" id="GO:0005524">
    <property type="term" value="F:ATP binding"/>
    <property type="evidence" value="ECO:0007669"/>
    <property type="project" value="UniProtKB-KW"/>
</dbReference>
<dbReference type="GO" id="GO:0004515">
    <property type="term" value="F:nicotinate-nucleotide adenylyltransferase activity"/>
    <property type="evidence" value="ECO:0007669"/>
    <property type="project" value="UniProtKB-UniRule"/>
</dbReference>
<dbReference type="GO" id="GO:0009435">
    <property type="term" value="P:NAD biosynthetic process"/>
    <property type="evidence" value="ECO:0007669"/>
    <property type="project" value="UniProtKB-UniRule"/>
</dbReference>
<dbReference type="CDD" id="cd02165">
    <property type="entry name" value="NMNAT"/>
    <property type="match status" value="1"/>
</dbReference>
<dbReference type="FunFam" id="3.40.50.620:FF:000251">
    <property type="entry name" value="Probable nicotinate-nucleotide adenylyltransferase"/>
    <property type="match status" value="1"/>
</dbReference>
<dbReference type="Gene3D" id="3.40.50.620">
    <property type="entry name" value="HUPs"/>
    <property type="match status" value="1"/>
</dbReference>
<dbReference type="HAMAP" id="MF_00244">
    <property type="entry name" value="NaMN_adenylyltr"/>
    <property type="match status" value="1"/>
</dbReference>
<dbReference type="InterPro" id="IPR004821">
    <property type="entry name" value="Cyt_trans-like"/>
</dbReference>
<dbReference type="InterPro" id="IPR005248">
    <property type="entry name" value="NadD/NMNAT"/>
</dbReference>
<dbReference type="InterPro" id="IPR014729">
    <property type="entry name" value="Rossmann-like_a/b/a_fold"/>
</dbReference>
<dbReference type="NCBIfam" id="TIGR00125">
    <property type="entry name" value="cyt_tran_rel"/>
    <property type="match status" value="1"/>
</dbReference>
<dbReference type="NCBIfam" id="TIGR00482">
    <property type="entry name" value="nicotinate (nicotinamide) nucleotide adenylyltransferase"/>
    <property type="match status" value="1"/>
</dbReference>
<dbReference type="PANTHER" id="PTHR39321">
    <property type="entry name" value="NICOTINATE-NUCLEOTIDE ADENYLYLTRANSFERASE-RELATED"/>
    <property type="match status" value="1"/>
</dbReference>
<dbReference type="PANTHER" id="PTHR39321:SF3">
    <property type="entry name" value="PHOSPHOPANTETHEINE ADENYLYLTRANSFERASE"/>
    <property type="match status" value="1"/>
</dbReference>
<dbReference type="Pfam" id="PF01467">
    <property type="entry name" value="CTP_transf_like"/>
    <property type="match status" value="1"/>
</dbReference>
<dbReference type="SUPFAM" id="SSF52374">
    <property type="entry name" value="Nucleotidylyl transferase"/>
    <property type="match status" value="1"/>
</dbReference>
<name>NADD_LEPBL</name>
<feature type="chain" id="PRO_0000310122" description="Probable nicotinate-nucleotide adenylyltransferase">
    <location>
        <begin position="1"/>
        <end position="197"/>
    </location>
</feature>
<protein>
    <recommendedName>
        <fullName evidence="1">Probable nicotinate-nucleotide adenylyltransferase</fullName>
        <ecNumber evidence="1">2.7.7.18</ecNumber>
    </recommendedName>
    <alternativeName>
        <fullName evidence="1">Deamido-NAD(+) diphosphorylase</fullName>
    </alternativeName>
    <alternativeName>
        <fullName evidence="1">Deamido-NAD(+) pyrophosphorylase</fullName>
    </alternativeName>
    <alternativeName>
        <fullName evidence="1">Nicotinate mononucleotide adenylyltransferase</fullName>
        <shortName evidence="1">NaMN adenylyltransferase</shortName>
    </alternativeName>
</protein>
<proteinExistence type="inferred from homology"/>
<sequence>MTSPILTGIFGGSFDPPHEGHSGILKSFFREVPDCREIFLIPNRQNPLKGEKFSSSENILEMLNLFVSEFSETIRILDLELNHPGPSYTIETIQKLKTLHPNREFVLLIGEDNYSNFHKWRNYEKILDEVRKVFVFRRFSEVVPRNSKLFSQFQFLKNPLIPASSTDLRQSFFQSTIPDRIPKKVLDYILRNRLYSK</sequence>
<gene>
    <name evidence="1" type="primary">nadD</name>
    <name type="ordered locus">LBL_0618</name>
</gene>
<comment type="function">
    <text evidence="1">Catalyzes the reversible adenylation of nicotinate mononucleotide (NaMN) to nicotinic acid adenine dinucleotide (NaAD).</text>
</comment>
<comment type="catalytic activity">
    <reaction evidence="1">
        <text>nicotinate beta-D-ribonucleotide + ATP + H(+) = deamido-NAD(+) + diphosphate</text>
        <dbReference type="Rhea" id="RHEA:22860"/>
        <dbReference type="ChEBI" id="CHEBI:15378"/>
        <dbReference type="ChEBI" id="CHEBI:30616"/>
        <dbReference type="ChEBI" id="CHEBI:33019"/>
        <dbReference type="ChEBI" id="CHEBI:57502"/>
        <dbReference type="ChEBI" id="CHEBI:58437"/>
        <dbReference type="EC" id="2.7.7.18"/>
    </reaction>
</comment>
<comment type="pathway">
    <text evidence="1">Cofactor biosynthesis; NAD(+) biosynthesis; deamido-NAD(+) from nicotinate D-ribonucleotide: step 1/1.</text>
</comment>
<comment type="similarity">
    <text evidence="1">Belongs to the NadD family.</text>
</comment>
<organism>
    <name type="scientific">Leptospira borgpetersenii serovar Hardjo-bovis (strain L550)</name>
    <dbReference type="NCBI Taxonomy" id="355276"/>
    <lineage>
        <taxon>Bacteria</taxon>
        <taxon>Pseudomonadati</taxon>
        <taxon>Spirochaetota</taxon>
        <taxon>Spirochaetia</taxon>
        <taxon>Leptospirales</taxon>
        <taxon>Leptospiraceae</taxon>
        <taxon>Leptospira</taxon>
    </lineage>
</organism>